<comment type="function">
    <text evidence="1">Probably required for nitrate uptake under anoxic conditions. Also possibly involved in excretion of nitrite produced by the dissimilatory reduction of nitrate (By similarity).</text>
</comment>
<comment type="subcellular location">
    <subcellularLocation>
        <location evidence="3">Cell membrane</location>
        <topology evidence="3">Multi-pass membrane protein</topology>
    </subcellularLocation>
</comment>
<comment type="induction">
    <text evidence="1">Positively regulated by the two-component system NreB/NreC.</text>
</comment>
<comment type="similarity">
    <text evidence="3">Belongs to the major facilitator superfamily. Nitrate/nitrite porter (TC 2.A.1.8) family.</text>
</comment>
<gene>
    <name type="primary">narT</name>
    <name type="synonym">narK</name>
    <name type="ordered locus">SAR2476</name>
</gene>
<name>NART_STAAR</name>
<evidence type="ECO:0000250" key="1"/>
<evidence type="ECO:0000255" key="2"/>
<evidence type="ECO:0000305" key="3"/>
<reference key="1">
    <citation type="journal article" date="2004" name="Proc. Natl. Acad. Sci. U.S.A.">
        <title>Complete genomes of two clinical Staphylococcus aureus strains: evidence for the rapid evolution of virulence and drug resistance.</title>
        <authorList>
            <person name="Holden M.T.G."/>
            <person name="Feil E.J."/>
            <person name="Lindsay J.A."/>
            <person name="Peacock S.J."/>
            <person name="Day N.P.J."/>
            <person name="Enright M.C."/>
            <person name="Foster T.J."/>
            <person name="Moore C.E."/>
            <person name="Hurst L."/>
            <person name="Atkin R."/>
            <person name="Barron A."/>
            <person name="Bason N."/>
            <person name="Bentley S.D."/>
            <person name="Chillingworth C."/>
            <person name="Chillingworth T."/>
            <person name="Churcher C."/>
            <person name="Clark L."/>
            <person name="Corton C."/>
            <person name="Cronin A."/>
            <person name="Doggett J."/>
            <person name="Dowd L."/>
            <person name="Feltwell T."/>
            <person name="Hance Z."/>
            <person name="Harris B."/>
            <person name="Hauser H."/>
            <person name="Holroyd S."/>
            <person name="Jagels K."/>
            <person name="James K.D."/>
            <person name="Lennard N."/>
            <person name="Line A."/>
            <person name="Mayes R."/>
            <person name="Moule S."/>
            <person name="Mungall K."/>
            <person name="Ormond D."/>
            <person name="Quail M.A."/>
            <person name="Rabbinowitsch E."/>
            <person name="Rutherford K.M."/>
            <person name="Sanders M."/>
            <person name="Sharp S."/>
            <person name="Simmonds M."/>
            <person name="Stevens K."/>
            <person name="Whitehead S."/>
            <person name="Barrell B.G."/>
            <person name="Spratt B.G."/>
            <person name="Parkhill J."/>
        </authorList>
    </citation>
    <scope>NUCLEOTIDE SEQUENCE [LARGE SCALE GENOMIC DNA]</scope>
    <source>
        <strain>MRSA252</strain>
    </source>
</reference>
<accession>Q6GE44</accession>
<keyword id="KW-1003">Cell membrane</keyword>
<keyword id="KW-0472">Membrane</keyword>
<keyword id="KW-0534">Nitrate assimilation</keyword>
<keyword id="KW-0812">Transmembrane</keyword>
<keyword id="KW-1133">Transmembrane helix</keyword>
<keyword id="KW-0813">Transport</keyword>
<dbReference type="EMBL" id="BX571856">
    <property type="protein sequence ID" value="CAG41458.1"/>
    <property type="molecule type" value="Genomic_DNA"/>
</dbReference>
<dbReference type="RefSeq" id="WP_000278551.1">
    <property type="nucleotide sequence ID" value="NC_002952.2"/>
</dbReference>
<dbReference type="SMR" id="Q6GE44"/>
<dbReference type="KEGG" id="sar:SAR2476"/>
<dbReference type="HOGENOM" id="CLU_001265_14_0_9"/>
<dbReference type="Proteomes" id="UP000000596">
    <property type="component" value="Chromosome"/>
</dbReference>
<dbReference type="GO" id="GO:0005886">
    <property type="term" value="C:plasma membrane"/>
    <property type="evidence" value="ECO:0007669"/>
    <property type="project" value="UniProtKB-SubCell"/>
</dbReference>
<dbReference type="GO" id="GO:0015112">
    <property type="term" value="F:nitrate transmembrane transporter activity"/>
    <property type="evidence" value="ECO:0007669"/>
    <property type="project" value="InterPro"/>
</dbReference>
<dbReference type="GO" id="GO:0042128">
    <property type="term" value="P:nitrate assimilation"/>
    <property type="evidence" value="ECO:0007669"/>
    <property type="project" value="UniProtKB-KW"/>
</dbReference>
<dbReference type="CDD" id="cd17341">
    <property type="entry name" value="MFS_NRT2_like"/>
    <property type="match status" value="1"/>
</dbReference>
<dbReference type="Gene3D" id="1.20.1250.20">
    <property type="entry name" value="MFS general substrate transporter like domains"/>
    <property type="match status" value="2"/>
</dbReference>
<dbReference type="InterPro" id="IPR011701">
    <property type="entry name" value="MFS"/>
</dbReference>
<dbReference type="InterPro" id="IPR020846">
    <property type="entry name" value="MFS_dom"/>
</dbReference>
<dbReference type="InterPro" id="IPR036259">
    <property type="entry name" value="MFS_trans_sf"/>
</dbReference>
<dbReference type="InterPro" id="IPR044772">
    <property type="entry name" value="NO3_transporter"/>
</dbReference>
<dbReference type="PANTHER" id="PTHR23515">
    <property type="entry name" value="HIGH-AFFINITY NITRATE TRANSPORTER 2.3"/>
    <property type="match status" value="1"/>
</dbReference>
<dbReference type="Pfam" id="PF07690">
    <property type="entry name" value="MFS_1"/>
    <property type="match status" value="1"/>
</dbReference>
<dbReference type="SUPFAM" id="SSF103473">
    <property type="entry name" value="MFS general substrate transporter"/>
    <property type="match status" value="1"/>
</dbReference>
<dbReference type="PROSITE" id="PS50850">
    <property type="entry name" value="MFS"/>
    <property type="match status" value="1"/>
</dbReference>
<proteinExistence type="inferred from homology"/>
<feature type="chain" id="PRO_0000349390" description="Probable nitrate transporter NarT">
    <location>
        <begin position="1"/>
        <end position="389"/>
    </location>
</feature>
<feature type="transmembrane region" description="Helical" evidence="2">
    <location>
        <begin position="14"/>
        <end position="34"/>
    </location>
</feature>
<feature type="transmembrane region" description="Helical" evidence="2">
    <location>
        <begin position="45"/>
        <end position="65"/>
    </location>
</feature>
<feature type="transmembrane region" description="Helical" evidence="2">
    <location>
        <begin position="69"/>
        <end position="89"/>
    </location>
</feature>
<feature type="transmembrane region" description="Helical" evidence="2">
    <location>
        <begin position="97"/>
        <end position="117"/>
    </location>
</feature>
<feature type="transmembrane region" description="Helical" evidence="2">
    <location>
        <begin position="139"/>
        <end position="159"/>
    </location>
</feature>
<feature type="transmembrane region" description="Helical" evidence="2">
    <location>
        <begin position="161"/>
        <end position="181"/>
    </location>
</feature>
<feature type="transmembrane region" description="Helical" evidence="2">
    <location>
        <begin position="211"/>
        <end position="231"/>
    </location>
</feature>
<feature type="transmembrane region" description="Helical" evidence="2">
    <location>
        <begin position="246"/>
        <end position="266"/>
    </location>
</feature>
<feature type="transmembrane region" description="Helical" evidence="2">
    <location>
        <begin position="268"/>
        <end position="288"/>
    </location>
</feature>
<feature type="transmembrane region" description="Helical" evidence="2">
    <location>
        <begin position="294"/>
        <end position="314"/>
    </location>
</feature>
<feature type="transmembrane region" description="Helical" evidence="2">
    <location>
        <begin position="331"/>
        <end position="351"/>
    </location>
</feature>
<feature type="transmembrane region" description="Helical" evidence="2">
    <location>
        <begin position="353"/>
        <end position="373"/>
    </location>
</feature>
<sequence length="389" mass="42145">MYKTKGGFQLTLQTLSLVVGFMAWSIIAPLMPFIKQDVNVTEGQISIILAIPVILGSVLRVPFGYLTNIVGAKWVFFTSFIVLLFPIFFLGQAQTPGMLMASGFFLGVGGAIFSVGVTSVPKYFPKEKVGLANGIYGMGNIGTAVSSFLAPPIAGIIGWQTTVRSYLIIIALFALIMFIFGDTQERKIKVPLMAQMKTLSKNYKLYYLSYWYFITFGAFVAFGIFLPNYLVNHFGIDKVDAGIRSGVFIALATFLRPIGGILGDKFNAVKVLMIDFVIMIIGAVILGISDHIALFTVGCLTISICAGIGNGLIFKLVPSYFSNEAGSANGIVSMMGGLGGFFPPLVITYVANLTGSSHLAFIFLAVFGCIALFTMRHLYQKEYGSLKHS</sequence>
<protein>
    <recommendedName>
        <fullName>Probable nitrate transporter NarT</fullName>
    </recommendedName>
</protein>
<organism>
    <name type="scientific">Staphylococcus aureus (strain MRSA252)</name>
    <dbReference type="NCBI Taxonomy" id="282458"/>
    <lineage>
        <taxon>Bacteria</taxon>
        <taxon>Bacillati</taxon>
        <taxon>Bacillota</taxon>
        <taxon>Bacilli</taxon>
        <taxon>Bacillales</taxon>
        <taxon>Staphylococcaceae</taxon>
        <taxon>Staphylococcus</taxon>
    </lineage>
</organism>